<evidence type="ECO:0000255" key="1">
    <source>
        <dbReference type="HAMAP-Rule" id="MF_01578"/>
    </source>
</evidence>
<evidence type="ECO:0000305" key="2"/>
<reference key="1">
    <citation type="journal article" date="2002" name="Nucleic Acids Res.">
        <title>Genome sequence of Shigella flexneri 2a: insights into pathogenicity through comparison with genomes of Escherichia coli K12 and O157.</title>
        <authorList>
            <person name="Jin Q."/>
            <person name="Yuan Z."/>
            <person name="Xu J."/>
            <person name="Wang Y."/>
            <person name="Shen Y."/>
            <person name="Lu W."/>
            <person name="Wang J."/>
            <person name="Liu H."/>
            <person name="Yang J."/>
            <person name="Yang F."/>
            <person name="Zhang X."/>
            <person name="Zhang J."/>
            <person name="Yang G."/>
            <person name="Wu H."/>
            <person name="Qu D."/>
            <person name="Dong J."/>
            <person name="Sun L."/>
            <person name="Xue Y."/>
            <person name="Zhao A."/>
            <person name="Gao Y."/>
            <person name="Zhu J."/>
            <person name="Kan B."/>
            <person name="Ding K."/>
            <person name="Chen S."/>
            <person name="Cheng H."/>
            <person name="Yao Z."/>
            <person name="He B."/>
            <person name="Chen R."/>
            <person name="Ma D."/>
            <person name="Qiang B."/>
            <person name="Wen Y."/>
            <person name="Hou Y."/>
            <person name="Yu J."/>
        </authorList>
    </citation>
    <scope>NUCLEOTIDE SEQUENCE [LARGE SCALE GENOMIC DNA]</scope>
    <source>
        <strain>301 / Serotype 2a</strain>
    </source>
</reference>
<reference key="2">
    <citation type="journal article" date="2003" name="Infect. Immun.">
        <title>Complete genome sequence and comparative genomics of Shigella flexneri serotype 2a strain 2457T.</title>
        <authorList>
            <person name="Wei J."/>
            <person name="Goldberg M.B."/>
            <person name="Burland V."/>
            <person name="Venkatesan M.M."/>
            <person name="Deng W."/>
            <person name="Fournier G."/>
            <person name="Mayhew G.F."/>
            <person name="Plunkett G. III"/>
            <person name="Rose D.J."/>
            <person name="Darling A."/>
            <person name="Mau B."/>
            <person name="Perna N.T."/>
            <person name="Payne S.M."/>
            <person name="Runyen-Janecky L.J."/>
            <person name="Zhou S."/>
            <person name="Schwartz D.C."/>
            <person name="Blattner F.R."/>
        </authorList>
    </citation>
    <scope>NUCLEOTIDE SEQUENCE [LARGE SCALE GENOMIC DNA]</scope>
    <source>
        <strain>ATCC 700930 / 2457T / Serotype 2a</strain>
    </source>
</reference>
<accession>Q83RA2</accession>
<accession>Q7UAH0</accession>
<protein>
    <recommendedName>
        <fullName evidence="1">Quinate/shikimate dehydrogenase</fullName>
        <ecNumber evidence="1">1.1.1.282</ecNumber>
    </recommendedName>
    <alternativeName>
        <fullName evidence="1">NAD-dependent shikimate 5-dehydrogenase</fullName>
    </alternativeName>
</protein>
<organism>
    <name type="scientific">Shigella flexneri</name>
    <dbReference type="NCBI Taxonomy" id="623"/>
    <lineage>
        <taxon>Bacteria</taxon>
        <taxon>Pseudomonadati</taxon>
        <taxon>Pseudomonadota</taxon>
        <taxon>Gammaproteobacteria</taxon>
        <taxon>Enterobacterales</taxon>
        <taxon>Enterobacteriaceae</taxon>
        <taxon>Shigella</taxon>
    </lineage>
</organism>
<proteinExistence type="inferred from homology"/>
<keyword id="KW-0028">Amino-acid biosynthesis</keyword>
<keyword id="KW-0057">Aromatic amino acid biosynthesis</keyword>
<keyword id="KW-0520">NAD</keyword>
<keyword id="KW-0521">NADP</keyword>
<keyword id="KW-0560">Oxidoreductase</keyword>
<keyword id="KW-1185">Reference proteome</keyword>
<sequence>MDVTAKYELIGLMAYPIRHSLSPEMQNKALEKAGLPFTYMAFEVDNDSFPGAIEGLKALKMRGTGVSMPNKQLACEYVDELTPAAKLVGAINTIVNDDGYLRGYNTDGTGHIRAIKESGFDIKGKTMVLLGAGGASTAIGAQGAIEGLKEIKLFNRRDEFFDKALAFAQRVNENTDCVVTDTDLADQQAFAEALASADILTNGTKVGMKPFENESLVNDISLLHPGLLVTECVYNPHMTKLLQQAQQAGCKTIDGYGMLLWQGAEQFTLWTGKDFPLEYVKQVMGFGA</sequence>
<gene>
    <name evidence="1" type="primary">ydiB</name>
    <name type="ordered locus">SF1722</name>
    <name type="ordered locus">S1854</name>
</gene>
<comment type="function">
    <text evidence="1">The actual biological function of YdiB remains unclear, nor is it known whether 3-dehydroshikimate or quinate represents the natural substrate. Catalyzes the reversible NAD-dependent reduction of both 3-dehydroshikimate (DHSA) and 3-dehydroquinate to yield shikimate (SA) and quinate, respectively. It can use both NAD or NADP for catalysis, however it has higher catalytic efficiency with NAD.</text>
</comment>
<comment type="catalytic activity">
    <reaction evidence="1">
        <text>L-quinate + NAD(+) = 3-dehydroquinate + NADH + H(+)</text>
        <dbReference type="Rhea" id="RHEA:22364"/>
        <dbReference type="ChEBI" id="CHEBI:15378"/>
        <dbReference type="ChEBI" id="CHEBI:29751"/>
        <dbReference type="ChEBI" id="CHEBI:32364"/>
        <dbReference type="ChEBI" id="CHEBI:57540"/>
        <dbReference type="ChEBI" id="CHEBI:57945"/>
        <dbReference type="EC" id="1.1.1.282"/>
    </reaction>
</comment>
<comment type="catalytic activity">
    <reaction evidence="1">
        <text>L-quinate + NADP(+) = 3-dehydroquinate + NADPH + H(+)</text>
        <dbReference type="Rhea" id="RHEA:18425"/>
        <dbReference type="ChEBI" id="CHEBI:15378"/>
        <dbReference type="ChEBI" id="CHEBI:29751"/>
        <dbReference type="ChEBI" id="CHEBI:32364"/>
        <dbReference type="ChEBI" id="CHEBI:57783"/>
        <dbReference type="ChEBI" id="CHEBI:58349"/>
        <dbReference type="EC" id="1.1.1.282"/>
    </reaction>
</comment>
<comment type="catalytic activity">
    <reaction evidence="1">
        <text>shikimate + NADP(+) = 3-dehydroshikimate + NADPH + H(+)</text>
        <dbReference type="Rhea" id="RHEA:17737"/>
        <dbReference type="ChEBI" id="CHEBI:15378"/>
        <dbReference type="ChEBI" id="CHEBI:16630"/>
        <dbReference type="ChEBI" id="CHEBI:36208"/>
        <dbReference type="ChEBI" id="CHEBI:57783"/>
        <dbReference type="ChEBI" id="CHEBI:58349"/>
        <dbReference type="EC" id="1.1.1.282"/>
    </reaction>
</comment>
<comment type="catalytic activity">
    <reaction evidence="1">
        <text>shikimate + NAD(+) = 3-dehydroshikimate + NADH + H(+)</text>
        <dbReference type="Rhea" id="RHEA:17741"/>
        <dbReference type="ChEBI" id="CHEBI:15378"/>
        <dbReference type="ChEBI" id="CHEBI:16630"/>
        <dbReference type="ChEBI" id="CHEBI:36208"/>
        <dbReference type="ChEBI" id="CHEBI:57540"/>
        <dbReference type="ChEBI" id="CHEBI:57945"/>
        <dbReference type="EC" id="1.1.1.282"/>
    </reaction>
</comment>
<comment type="pathway">
    <text evidence="1">Metabolic intermediate biosynthesis; chorismate biosynthesis; chorismate from D-erythrose 4-phosphate and phosphoenolpyruvate: step 4/7.</text>
</comment>
<comment type="subunit">
    <text evidence="1">Homodimer.</text>
</comment>
<comment type="similarity">
    <text evidence="1">Belongs to the shikimate dehydrogenase family.</text>
</comment>
<feature type="chain" id="PRO_0000280777" description="Quinate/shikimate dehydrogenase">
    <location>
        <begin position="1"/>
        <end position="288"/>
    </location>
</feature>
<feature type="binding site" evidence="1">
    <location>
        <position position="71"/>
    </location>
    <ligand>
        <name>substrate</name>
    </ligand>
</feature>
<feature type="binding site" evidence="1">
    <location>
        <position position="107"/>
    </location>
    <ligand>
        <name>substrate</name>
    </ligand>
</feature>
<feature type="binding site" evidence="1">
    <location>
        <begin position="132"/>
        <end position="135"/>
    </location>
    <ligand>
        <name>NAD(+)</name>
        <dbReference type="ChEBI" id="CHEBI:57540"/>
    </ligand>
</feature>
<feature type="binding site" evidence="1">
    <location>
        <begin position="155"/>
        <end position="158"/>
    </location>
    <ligand>
        <name>NAD(+)</name>
        <dbReference type="ChEBI" id="CHEBI:57540"/>
    </ligand>
</feature>
<feature type="binding site" evidence="1">
    <location>
        <position position="205"/>
    </location>
    <ligand>
        <name>NAD(+)</name>
        <dbReference type="ChEBI" id="CHEBI:57540"/>
    </ligand>
</feature>
<feature type="binding site" evidence="1">
    <location>
        <begin position="232"/>
        <end position="235"/>
    </location>
    <ligand>
        <name>NAD(+)</name>
        <dbReference type="ChEBI" id="CHEBI:57540"/>
    </ligand>
</feature>
<feature type="binding site" evidence="1">
    <location>
        <position position="255"/>
    </location>
    <ligand>
        <name>NAD(+)</name>
        <dbReference type="ChEBI" id="CHEBI:57540"/>
    </ligand>
</feature>
<feature type="sequence conflict" description="In Ref. 2; AAP17186." evidence="2" ref="2">
    <original>F</original>
    <variation>L</variation>
    <location>
        <position position="211"/>
    </location>
</feature>
<name>YDIB_SHIFL</name>
<dbReference type="EC" id="1.1.1.282" evidence="1"/>
<dbReference type="EMBL" id="AE005674">
    <property type="protein sequence ID" value="AAN43298.1"/>
    <property type="molecule type" value="Genomic_DNA"/>
</dbReference>
<dbReference type="EMBL" id="AE014073">
    <property type="protein sequence ID" value="AAP17186.1"/>
    <property type="molecule type" value="Genomic_DNA"/>
</dbReference>
<dbReference type="RefSeq" id="WP_000383464.1">
    <property type="nucleotide sequence ID" value="NZ_CP123365.1"/>
</dbReference>
<dbReference type="SMR" id="Q83RA2"/>
<dbReference type="STRING" id="198214.SF1722"/>
<dbReference type="PaxDb" id="198214-SF1722"/>
<dbReference type="KEGG" id="sfl:SF1722"/>
<dbReference type="KEGG" id="sfx:S1854"/>
<dbReference type="PATRIC" id="fig|198214.7.peg.2036"/>
<dbReference type="HOGENOM" id="CLU_044063_4_4_6"/>
<dbReference type="UniPathway" id="UPA00053">
    <property type="reaction ID" value="UER00087"/>
</dbReference>
<dbReference type="Proteomes" id="UP000001006">
    <property type="component" value="Chromosome"/>
</dbReference>
<dbReference type="Proteomes" id="UP000002673">
    <property type="component" value="Chromosome"/>
</dbReference>
<dbReference type="GO" id="GO:0030266">
    <property type="term" value="F:quinate 3-dehydrogenase (NAD+) activity"/>
    <property type="evidence" value="ECO:0007669"/>
    <property type="project" value="UniProtKB-UniRule"/>
</dbReference>
<dbReference type="GO" id="GO:0052733">
    <property type="term" value="F:quinate 3-dehydrogenase (NADP+) activity"/>
    <property type="evidence" value="ECO:0007669"/>
    <property type="project" value="InterPro"/>
</dbReference>
<dbReference type="GO" id="GO:0052734">
    <property type="term" value="F:shikimate 3-dehydrogenase (NAD+) activity"/>
    <property type="evidence" value="ECO:0007669"/>
    <property type="project" value="InterPro"/>
</dbReference>
<dbReference type="GO" id="GO:0004764">
    <property type="term" value="F:shikimate 3-dehydrogenase (NADP+) activity"/>
    <property type="evidence" value="ECO:0007669"/>
    <property type="project" value="UniProtKB-UniRule"/>
</dbReference>
<dbReference type="GO" id="GO:0008652">
    <property type="term" value="P:amino acid biosynthetic process"/>
    <property type="evidence" value="ECO:0007669"/>
    <property type="project" value="UniProtKB-KW"/>
</dbReference>
<dbReference type="GO" id="GO:0009073">
    <property type="term" value="P:aromatic amino acid family biosynthetic process"/>
    <property type="evidence" value="ECO:0007669"/>
    <property type="project" value="UniProtKB-KW"/>
</dbReference>
<dbReference type="GO" id="GO:0009423">
    <property type="term" value="P:chorismate biosynthetic process"/>
    <property type="evidence" value="ECO:0007669"/>
    <property type="project" value="UniProtKB-UniRule"/>
</dbReference>
<dbReference type="GO" id="GO:0019632">
    <property type="term" value="P:shikimate metabolic process"/>
    <property type="evidence" value="ECO:0007669"/>
    <property type="project" value="TreeGrafter"/>
</dbReference>
<dbReference type="CDD" id="cd01065">
    <property type="entry name" value="NAD_bind_Shikimate_DH"/>
    <property type="match status" value="1"/>
</dbReference>
<dbReference type="FunFam" id="3.40.50.10860:FF:000004">
    <property type="entry name" value="Quinate/shikimate dehydrogenase"/>
    <property type="match status" value="1"/>
</dbReference>
<dbReference type="FunFam" id="3.40.50.720:FF:000086">
    <property type="entry name" value="Quinate/shikimate dehydrogenase"/>
    <property type="match status" value="1"/>
</dbReference>
<dbReference type="Gene3D" id="3.40.50.10860">
    <property type="entry name" value="Leucine Dehydrogenase, chain A, domain 1"/>
    <property type="match status" value="1"/>
</dbReference>
<dbReference type="Gene3D" id="3.40.50.720">
    <property type="entry name" value="NAD(P)-binding Rossmann-like Domain"/>
    <property type="match status" value="1"/>
</dbReference>
<dbReference type="HAMAP" id="MF_00222">
    <property type="entry name" value="Shikimate_DH_AroE"/>
    <property type="match status" value="1"/>
</dbReference>
<dbReference type="HAMAP" id="MF_01578">
    <property type="entry name" value="Shikimate_DH_YdiB"/>
    <property type="match status" value="1"/>
</dbReference>
<dbReference type="InterPro" id="IPR046346">
    <property type="entry name" value="Aminoacid_DH-like_N_sf"/>
</dbReference>
<dbReference type="InterPro" id="IPR036291">
    <property type="entry name" value="NAD(P)-bd_dom_sf"/>
</dbReference>
<dbReference type="InterPro" id="IPR022872">
    <property type="entry name" value="Quinate/Shikimate_DH"/>
</dbReference>
<dbReference type="InterPro" id="IPR041121">
    <property type="entry name" value="SDH_C"/>
</dbReference>
<dbReference type="InterPro" id="IPR013708">
    <property type="entry name" value="Shikimate_DH-bd_N"/>
</dbReference>
<dbReference type="InterPro" id="IPR022893">
    <property type="entry name" value="Shikimate_DH_fam"/>
</dbReference>
<dbReference type="NCBIfam" id="NF009390">
    <property type="entry name" value="PRK12749.1"/>
    <property type="match status" value="1"/>
</dbReference>
<dbReference type="PANTHER" id="PTHR21089:SF1">
    <property type="entry name" value="BIFUNCTIONAL 3-DEHYDROQUINATE DEHYDRATASE_SHIKIMATE DEHYDROGENASE, CHLOROPLASTIC"/>
    <property type="match status" value="1"/>
</dbReference>
<dbReference type="PANTHER" id="PTHR21089">
    <property type="entry name" value="SHIKIMATE DEHYDROGENASE"/>
    <property type="match status" value="1"/>
</dbReference>
<dbReference type="Pfam" id="PF18317">
    <property type="entry name" value="SDH_C"/>
    <property type="match status" value="1"/>
</dbReference>
<dbReference type="Pfam" id="PF08501">
    <property type="entry name" value="Shikimate_dh_N"/>
    <property type="match status" value="1"/>
</dbReference>
<dbReference type="SUPFAM" id="SSF53223">
    <property type="entry name" value="Aminoacid dehydrogenase-like, N-terminal domain"/>
    <property type="match status" value="1"/>
</dbReference>
<dbReference type="SUPFAM" id="SSF51735">
    <property type="entry name" value="NAD(P)-binding Rossmann-fold domains"/>
    <property type="match status" value="1"/>
</dbReference>